<comment type="subcellular location">
    <subcellularLocation>
        <location evidence="1">Cytoplasm</location>
    </subcellularLocation>
</comment>
<comment type="similarity">
    <text evidence="1">Belongs to the TACO1 family.</text>
</comment>
<accession>Q4FT67</accession>
<gene>
    <name type="ordered locus">Psyc_0938</name>
</gene>
<organism>
    <name type="scientific">Psychrobacter arcticus (strain DSM 17307 / VKM B-2377 / 273-4)</name>
    <dbReference type="NCBI Taxonomy" id="259536"/>
    <lineage>
        <taxon>Bacteria</taxon>
        <taxon>Pseudomonadati</taxon>
        <taxon>Pseudomonadota</taxon>
        <taxon>Gammaproteobacteria</taxon>
        <taxon>Moraxellales</taxon>
        <taxon>Moraxellaceae</taxon>
        <taxon>Psychrobacter</taxon>
    </lineage>
</organism>
<dbReference type="EMBL" id="CP000082">
    <property type="protein sequence ID" value="AAZ18791.1"/>
    <property type="molecule type" value="Genomic_DNA"/>
</dbReference>
<dbReference type="RefSeq" id="WP_011280214.1">
    <property type="nucleotide sequence ID" value="NC_007204.1"/>
</dbReference>
<dbReference type="SMR" id="Q4FT67"/>
<dbReference type="STRING" id="259536.Psyc_0938"/>
<dbReference type="KEGG" id="par:Psyc_0938"/>
<dbReference type="eggNOG" id="COG0217">
    <property type="taxonomic scope" value="Bacteria"/>
</dbReference>
<dbReference type="HOGENOM" id="CLU_062974_2_2_6"/>
<dbReference type="OrthoDB" id="9781053at2"/>
<dbReference type="Proteomes" id="UP000000546">
    <property type="component" value="Chromosome"/>
</dbReference>
<dbReference type="GO" id="GO:0005829">
    <property type="term" value="C:cytosol"/>
    <property type="evidence" value="ECO:0007669"/>
    <property type="project" value="TreeGrafter"/>
</dbReference>
<dbReference type="GO" id="GO:0003677">
    <property type="term" value="F:DNA binding"/>
    <property type="evidence" value="ECO:0007669"/>
    <property type="project" value="UniProtKB-UniRule"/>
</dbReference>
<dbReference type="GO" id="GO:0006355">
    <property type="term" value="P:regulation of DNA-templated transcription"/>
    <property type="evidence" value="ECO:0007669"/>
    <property type="project" value="UniProtKB-UniRule"/>
</dbReference>
<dbReference type="FunFam" id="1.10.10.200:FF:000001">
    <property type="entry name" value="Probable transcriptional regulatory protein YebC"/>
    <property type="match status" value="1"/>
</dbReference>
<dbReference type="FunFam" id="3.30.70.980:FF:000002">
    <property type="entry name" value="Probable transcriptional regulatory protein YebC"/>
    <property type="match status" value="1"/>
</dbReference>
<dbReference type="Gene3D" id="1.10.10.200">
    <property type="match status" value="1"/>
</dbReference>
<dbReference type="Gene3D" id="3.30.70.980">
    <property type="match status" value="2"/>
</dbReference>
<dbReference type="HAMAP" id="MF_00693">
    <property type="entry name" value="Transcrip_reg_TACO1"/>
    <property type="match status" value="1"/>
</dbReference>
<dbReference type="InterPro" id="IPR017856">
    <property type="entry name" value="Integrase-like_N"/>
</dbReference>
<dbReference type="InterPro" id="IPR048300">
    <property type="entry name" value="TACO1_YebC-like_2nd/3rd_dom"/>
</dbReference>
<dbReference type="InterPro" id="IPR049083">
    <property type="entry name" value="TACO1_YebC_N"/>
</dbReference>
<dbReference type="InterPro" id="IPR002876">
    <property type="entry name" value="Transcrip_reg_TACO1-like"/>
</dbReference>
<dbReference type="InterPro" id="IPR026564">
    <property type="entry name" value="Transcrip_reg_TACO1-like_dom3"/>
</dbReference>
<dbReference type="InterPro" id="IPR029072">
    <property type="entry name" value="YebC-like"/>
</dbReference>
<dbReference type="NCBIfam" id="NF001030">
    <property type="entry name" value="PRK00110.1"/>
    <property type="match status" value="1"/>
</dbReference>
<dbReference type="NCBIfam" id="NF009044">
    <property type="entry name" value="PRK12378.1"/>
    <property type="match status" value="1"/>
</dbReference>
<dbReference type="NCBIfam" id="TIGR01033">
    <property type="entry name" value="YebC/PmpR family DNA-binding transcriptional regulator"/>
    <property type="match status" value="1"/>
</dbReference>
<dbReference type="PANTHER" id="PTHR12532:SF6">
    <property type="entry name" value="TRANSCRIPTIONAL REGULATORY PROTEIN YEBC-RELATED"/>
    <property type="match status" value="1"/>
</dbReference>
<dbReference type="PANTHER" id="PTHR12532">
    <property type="entry name" value="TRANSLATIONAL ACTIVATOR OF CYTOCHROME C OXIDASE 1"/>
    <property type="match status" value="1"/>
</dbReference>
<dbReference type="Pfam" id="PF20772">
    <property type="entry name" value="TACO1_YebC_N"/>
    <property type="match status" value="1"/>
</dbReference>
<dbReference type="Pfam" id="PF01709">
    <property type="entry name" value="Transcrip_reg"/>
    <property type="match status" value="1"/>
</dbReference>
<dbReference type="SUPFAM" id="SSF75625">
    <property type="entry name" value="YebC-like"/>
    <property type="match status" value="1"/>
</dbReference>
<feature type="chain" id="PRO_0000257108" description="Probable transcriptional regulatory protein Psyc_0938">
    <location>
        <begin position="1"/>
        <end position="249"/>
    </location>
</feature>
<evidence type="ECO:0000255" key="1">
    <source>
        <dbReference type="HAMAP-Rule" id="MF_00693"/>
    </source>
</evidence>
<protein>
    <recommendedName>
        <fullName evidence="1">Probable transcriptional regulatory protein Psyc_0938</fullName>
    </recommendedName>
</protein>
<name>Y938_PSYA2</name>
<sequence>MAGHSKWANIKHRKARQDAVKGKVFTKIIREIVSAAKQGDPDPDKNPRLRAVIEKALSVNMTRDTINRAVARGTGGDDNDNMDEVSYEGYGIGGVAVLVETMTDNLNRTVSEVRHAFTKNEGNLGTTGSVAYLFNKRGEISFNDISLEDEVMLVALDAGALDIENDGKSLLVITEWENFGHVKDALNAAGLVSDNAEVTMSPSTSAEIDNVEDAEKVMKMIDMLEDIDDVQEVYSNVNFSDEVMAQLEQ</sequence>
<keyword id="KW-0963">Cytoplasm</keyword>
<keyword id="KW-0238">DNA-binding</keyword>
<keyword id="KW-1185">Reference proteome</keyword>
<keyword id="KW-0804">Transcription</keyword>
<keyword id="KW-0805">Transcription regulation</keyword>
<reference key="1">
    <citation type="journal article" date="2010" name="Appl. Environ. Microbiol.">
        <title>The genome sequence of Psychrobacter arcticus 273-4, a psychroactive Siberian permafrost bacterium, reveals mechanisms for adaptation to low-temperature growth.</title>
        <authorList>
            <person name="Ayala-del-Rio H.L."/>
            <person name="Chain P.S."/>
            <person name="Grzymski J.J."/>
            <person name="Ponder M.A."/>
            <person name="Ivanova N."/>
            <person name="Bergholz P.W."/>
            <person name="Di Bartolo G."/>
            <person name="Hauser L."/>
            <person name="Land M."/>
            <person name="Bakermans C."/>
            <person name="Rodrigues D."/>
            <person name="Klappenbach J."/>
            <person name="Zarka D."/>
            <person name="Larimer F."/>
            <person name="Richardson P."/>
            <person name="Murray A."/>
            <person name="Thomashow M."/>
            <person name="Tiedje J.M."/>
        </authorList>
    </citation>
    <scope>NUCLEOTIDE SEQUENCE [LARGE SCALE GENOMIC DNA]</scope>
    <source>
        <strain>DSM 17307 / VKM B-2377 / 273-4</strain>
    </source>
</reference>
<proteinExistence type="inferred from homology"/>